<gene>
    <name evidence="1" type="primary">nuoN</name>
    <name type="ordered locus">Bind_2385</name>
</gene>
<accession>B2IHV3</accession>
<sequence>MTPLPVVLAHALPELILAGGVLLLILIGAIRGKDSDGPMTELAVGLLGIAILTLVLGTKTQAVLFDGSFIDDAFGRFMKVLVLIGSLVSLIMGQTYLAREKIDKFEFPILILLSTLGMLMLISATGLIALYLGLELMSLALYVIAAFHRDDVKASEAGLKYFVLGALSSGMLLYGASLIYGFAGTVNFTGIATALHGETSLGVVFGLVFLTAGLAFKMSTVPFHMWTPDVYEGAPTPVTAFFASAPKLAAIAITMRIMITAFAGIKPQWQQIIVFISILSMALGSFAAIGQTNIKRLMAYSSIGHMGFALVGLAAGTETGIQGVLAYMAIYLVMTLGTFAAILSMRVNGVNVEQISDLAGLARTRGSMAFFLAIMMFSLAGIPPLAGFFAKWYVFNAAIQAHLYPLAVIGVLCSTVGAYYYLRIVKVMYFDDPAPAFDRPTPTLAAVLIVTGLAVLLLCVYPGSFVEATTVAARSLF</sequence>
<reference key="1">
    <citation type="journal article" date="2010" name="J. Bacteriol.">
        <title>Complete genome sequence of Beijerinckia indica subsp. indica.</title>
        <authorList>
            <person name="Tamas I."/>
            <person name="Dedysh S.N."/>
            <person name="Liesack W."/>
            <person name="Stott M.B."/>
            <person name="Alam M."/>
            <person name="Murrell J.C."/>
            <person name="Dunfield P.F."/>
        </authorList>
    </citation>
    <scope>NUCLEOTIDE SEQUENCE [LARGE SCALE GENOMIC DNA]</scope>
    <source>
        <strain>ATCC 9039 / DSM 1715 / NCIMB 8712</strain>
    </source>
</reference>
<evidence type="ECO:0000255" key="1">
    <source>
        <dbReference type="HAMAP-Rule" id="MF_00445"/>
    </source>
</evidence>
<keyword id="KW-0997">Cell inner membrane</keyword>
<keyword id="KW-1003">Cell membrane</keyword>
<keyword id="KW-0472">Membrane</keyword>
<keyword id="KW-0520">NAD</keyword>
<keyword id="KW-0874">Quinone</keyword>
<keyword id="KW-1185">Reference proteome</keyword>
<keyword id="KW-1278">Translocase</keyword>
<keyword id="KW-0812">Transmembrane</keyword>
<keyword id="KW-1133">Transmembrane helix</keyword>
<keyword id="KW-0813">Transport</keyword>
<keyword id="KW-0830">Ubiquinone</keyword>
<proteinExistence type="inferred from homology"/>
<dbReference type="EC" id="7.1.1.-" evidence="1"/>
<dbReference type="EMBL" id="CP001016">
    <property type="protein sequence ID" value="ACB95996.1"/>
    <property type="molecule type" value="Genomic_DNA"/>
</dbReference>
<dbReference type="RefSeq" id="WP_012385349.1">
    <property type="nucleotide sequence ID" value="NC_010581.1"/>
</dbReference>
<dbReference type="SMR" id="B2IHV3"/>
<dbReference type="STRING" id="395963.Bind_2385"/>
<dbReference type="KEGG" id="bid:Bind_2385"/>
<dbReference type="eggNOG" id="COG1007">
    <property type="taxonomic scope" value="Bacteria"/>
</dbReference>
<dbReference type="HOGENOM" id="CLU_007100_1_3_5"/>
<dbReference type="OrthoDB" id="9811718at2"/>
<dbReference type="Proteomes" id="UP000001695">
    <property type="component" value="Chromosome"/>
</dbReference>
<dbReference type="GO" id="GO:0005886">
    <property type="term" value="C:plasma membrane"/>
    <property type="evidence" value="ECO:0007669"/>
    <property type="project" value="UniProtKB-SubCell"/>
</dbReference>
<dbReference type="GO" id="GO:0008137">
    <property type="term" value="F:NADH dehydrogenase (ubiquinone) activity"/>
    <property type="evidence" value="ECO:0007669"/>
    <property type="project" value="InterPro"/>
</dbReference>
<dbReference type="GO" id="GO:0050136">
    <property type="term" value="F:NADH:ubiquinone reductase (non-electrogenic) activity"/>
    <property type="evidence" value="ECO:0007669"/>
    <property type="project" value="UniProtKB-UniRule"/>
</dbReference>
<dbReference type="GO" id="GO:0048038">
    <property type="term" value="F:quinone binding"/>
    <property type="evidence" value="ECO:0007669"/>
    <property type="project" value="UniProtKB-KW"/>
</dbReference>
<dbReference type="GO" id="GO:0042773">
    <property type="term" value="P:ATP synthesis coupled electron transport"/>
    <property type="evidence" value="ECO:0007669"/>
    <property type="project" value="InterPro"/>
</dbReference>
<dbReference type="HAMAP" id="MF_00445">
    <property type="entry name" value="NDH1_NuoN_1"/>
    <property type="match status" value="1"/>
</dbReference>
<dbReference type="InterPro" id="IPR010096">
    <property type="entry name" value="NADH-Q_OxRdtase_suN/2"/>
</dbReference>
<dbReference type="InterPro" id="IPR001750">
    <property type="entry name" value="ND/Mrp_TM"/>
</dbReference>
<dbReference type="NCBIfam" id="TIGR01770">
    <property type="entry name" value="NDH_I_N"/>
    <property type="match status" value="1"/>
</dbReference>
<dbReference type="NCBIfam" id="NF004440">
    <property type="entry name" value="PRK05777.1-3"/>
    <property type="match status" value="1"/>
</dbReference>
<dbReference type="PANTHER" id="PTHR22773">
    <property type="entry name" value="NADH DEHYDROGENASE"/>
    <property type="match status" value="1"/>
</dbReference>
<dbReference type="Pfam" id="PF00361">
    <property type="entry name" value="Proton_antipo_M"/>
    <property type="match status" value="1"/>
</dbReference>
<dbReference type="PRINTS" id="PR01434">
    <property type="entry name" value="NADHDHGNASE5"/>
</dbReference>
<organism>
    <name type="scientific">Beijerinckia indica subsp. indica (strain ATCC 9039 / DSM 1715 / NCIMB 8712)</name>
    <dbReference type="NCBI Taxonomy" id="395963"/>
    <lineage>
        <taxon>Bacteria</taxon>
        <taxon>Pseudomonadati</taxon>
        <taxon>Pseudomonadota</taxon>
        <taxon>Alphaproteobacteria</taxon>
        <taxon>Hyphomicrobiales</taxon>
        <taxon>Beijerinckiaceae</taxon>
        <taxon>Beijerinckia</taxon>
    </lineage>
</organism>
<protein>
    <recommendedName>
        <fullName evidence="1">NADH-quinone oxidoreductase subunit N</fullName>
        <ecNumber evidence="1">7.1.1.-</ecNumber>
    </recommendedName>
    <alternativeName>
        <fullName evidence="1">NADH dehydrogenase I subunit N</fullName>
    </alternativeName>
    <alternativeName>
        <fullName evidence="1">NDH-1 subunit N</fullName>
    </alternativeName>
</protein>
<feature type="chain" id="PRO_0000391110" description="NADH-quinone oxidoreductase subunit N">
    <location>
        <begin position="1"/>
        <end position="477"/>
    </location>
</feature>
<feature type="transmembrane region" description="Helical" evidence="1">
    <location>
        <begin position="7"/>
        <end position="27"/>
    </location>
</feature>
<feature type="transmembrane region" description="Helical" evidence="1">
    <location>
        <begin position="37"/>
        <end position="57"/>
    </location>
</feature>
<feature type="transmembrane region" description="Helical" evidence="1">
    <location>
        <begin position="77"/>
        <end position="97"/>
    </location>
</feature>
<feature type="transmembrane region" description="Helical" evidence="1">
    <location>
        <begin position="109"/>
        <end position="129"/>
    </location>
</feature>
<feature type="transmembrane region" description="Helical" evidence="1">
    <location>
        <begin position="162"/>
        <end position="182"/>
    </location>
</feature>
<feature type="transmembrane region" description="Helical" evidence="1">
    <location>
        <begin position="201"/>
        <end position="221"/>
    </location>
</feature>
<feature type="transmembrane region" description="Helical" evidence="1">
    <location>
        <begin position="233"/>
        <end position="253"/>
    </location>
</feature>
<feature type="transmembrane region" description="Helical" evidence="1">
    <location>
        <begin position="272"/>
        <end position="292"/>
    </location>
</feature>
<feature type="transmembrane region" description="Helical" evidence="1">
    <location>
        <begin position="297"/>
        <end position="317"/>
    </location>
</feature>
<feature type="transmembrane region" description="Helical" evidence="1">
    <location>
        <begin position="323"/>
        <end position="343"/>
    </location>
</feature>
<feature type="transmembrane region" description="Helical" evidence="1">
    <location>
        <begin position="369"/>
        <end position="389"/>
    </location>
</feature>
<feature type="transmembrane region" description="Helical" evidence="1">
    <location>
        <begin position="402"/>
        <end position="424"/>
    </location>
</feature>
<feature type="transmembrane region" description="Helical" evidence="1">
    <location>
        <begin position="446"/>
        <end position="466"/>
    </location>
</feature>
<comment type="function">
    <text evidence="1">NDH-1 shuttles electrons from NADH, via FMN and iron-sulfur (Fe-S) centers, to quinones in the respiratory chain. The immediate electron acceptor for the enzyme in this species is believed to be ubiquinone. Couples the redox reaction to proton translocation (for every two electrons transferred, four hydrogen ions are translocated across the cytoplasmic membrane), and thus conserves the redox energy in a proton gradient.</text>
</comment>
<comment type="catalytic activity">
    <reaction evidence="1">
        <text>a quinone + NADH + 5 H(+)(in) = a quinol + NAD(+) + 4 H(+)(out)</text>
        <dbReference type="Rhea" id="RHEA:57888"/>
        <dbReference type="ChEBI" id="CHEBI:15378"/>
        <dbReference type="ChEBI" id="CHEBI:24646"/>
        <dbReference type="ChEBI" id="CHEBI:57540"/>
        <dbReference type="ChEBI" id="CHEBI:57945"/>
        <dbReference type="ChEBI" id="CHEBI:132124"/>
    </reaction>
</comment>
<comment type="subunit">
    <text evidence="1">NDH-1 is composed of 14 different subunits. Subunits NuoA, H, J, K, L, M, N constitute the membrane sector of the complex.</text>
</comment>
<comment type="subcellular location">
    <subcellularLocation>
        <location evidence="1">Cell inner membrane</location>
        <topology evidence="1">Multi-pass membrane protein</topology>
    </subcellularLocation>
</comment>
<comment type="similarity">
    <text evidence="1">Belongs to the complex I subunit 2 family.</text>
</comment>
<name>NUON_BEII9</name>